<comment type="function">
    <text evidence="1">Isoform G2P plays an essential role in viral DNA replication. Binds the origin of replication and cleaves the dsDNA replicative form I (RFI) and becomes covalently bound to it via phosphotyrosine bond, generating the dsDNA replicative form II (RFII). In turn, viral DNA replication initiates at the 3'-OH of the cleavage site. After one round of rolling circle synthesis, protein G2P is linked to the newly synthesized ssDNA and joins the ends of the displaced strand to generate a circular single-stranded molecule ready to be packed into a virion.</text>
</comment>
<comment type="function">
    <text evidence="1">Isoform G10P protein binds to double-stranded DNA and prevents hydrolysis by nucleases. Additionally, G10P is an inhibitor of DNA replication and may have a role in the transition from semiconservative replicative form DNA replication to single-stranded DNA synthesis in the life cycle.</text>
</comment>
<comment type="catalytic activity">
    <reaction>
        <text>ATP + (deoxyribonucleotide)n-3'-hydroxyl + 5'-phospho-(deoxyribonucleotide)m = (deoxyribonucleotide)n+m + AMP + diphosphate.</text>
        <dbReference type="EC" id="6.5.1.1"/>
    </reaction>
</comment>
<comment type="alternative products">
    <event type="alternative initiation"/>
    <isoform>
        <id>P03660-1</id>
        <name>G2P</name>
        <name>Gene 2 protein</name>
        <sequence type="displayed"/>
    </isoform>
    <isoform>
        <id>P03660-2</id>
        <name>G10P</name>
        <name>Gene 10 protein</name>
        <sequence type="described" ref="VSP_018673"/>
    </isoform>
</comment>
<comment type="similarity">
    <text evidence="2">Belongs to the inovirus G2P protein family.</text>
</comment>
<protein>
    <recommendedName>
        <fullName>Replication-associated protein G2P</fullName>
        <shortName>Rep</shortName>
        <ecNumber>3.1.21.-</ecNumber>
        <ecNumber>6.5.1.1</ecNumber>
    </recommendedName>
    <alternativeName>
        <fullName>G2P</fullName>
    </alternativeName>
    <alternativeName>
        <fullName>Gene 2 protein</fullName>
    </alternativeName>
</protein>
<organismHost>
    <name type="scientific">Escherichia coli</name>
    <dbReference type="NCBI Taxonomy" id="562"/>
</organismHost>
<evidence type="ECO:0000250" key="1"/>
<evidence type="ECO:0000305" key="2"/>
<dbReference type="EC" id="3.1.21.-"/>
<dbReference type="EC" id="6.5.1.1"/>
<dbReference type="EMBL" id="X02139">
    <property type="protein sequence ID" value="CAA26067.1"/>
    <property type="molecule type" value="Genomic_DNA"/>
</dbReference>
<dbReference type="EMBL" id="X02139">
    <property type="protein sequence ID" value="CAA26068.1"/>
    <property type="molecule type" value="Genomic_DNA"/>
</dbReference>
<dbReference type="PIR" id="A04265">
    <property type="entry name" value="Z2BPIK"/>
</dbReference>
<dbReference type="RefSeq" id="NP_040570.1">
    <molecule id="P03660-1"/>
    <property type="nucleotide sequence ID" value="NC_002014.1"/>
</dbReference>
<dbReference type="RefSeq" id="NP_040571.1">
    <molecule id="P03660-2"/>
    <property type="nucleotide sequence ID" value="NC_002014.1"/>
</dbReference>
<dbReference type="GeneID" id="1260890"/>
<dbReference type="KEGG" id="vg:1260890"/>
<dbReference type="KEGG" id="vg:1260892"/>
<dbReference type="OrthoDB" id="29900at10239"/>
<dbReference type="Proteomes" id="UP000000372">
    <property type="component" value="Genome"/>
</dbReference>
<dbReference type="GO" id="GO:0003677">
    <property type="term" value="F:DNA binding"/>
    <property type="evidence" value="ECO:0007669"/>
    <property type="project" value="UniProtKB-KW"/>
</dbReference>
<dbReference type="GO" id="GO:0003910">
    <property type="term" value="F:DNA ligase (ATP) activity"/>
    <property type="evidence" value="ECO:0007669"/>
    <property type="project" value="UniProtKB-EC"/>
</dbReference>
<dbReference type="GO" id="GO:0004519">
    <property type="term" value="F:endonuclease activity"/>
    <property type="evidence" value="ECO:0007669"/>
    <property type="project" value="UniProtKB-KW"/>
</dbReference>
<dbReference type="GO" id="GO:0006260">
    <property type="term" value="P:DNA replication"/>
    <property type="evidence" value="ECO:0007669"/>
    <property type="project" value="UniProtKB-KW"/>
</dbReference>
<dbReference type="InterPro" id="IPR006516">
    <property type="entry name" value="G2P"/>
</dbReference>
<dbReference type="InterPro" id="IPR022688">
    <property type="entry name" value="G2P_C"/>
</dbReference>
<dbReference type="InterPro" id="IPR022686">
    <property type="entry name" value="G2P_N"/>
</dbReference>
<dbReference type="NCBIfam" id="TIGR01629">
    <property type="entry name" value="rep_II_X"/>
    <property type="match status" value="1"/>
</dbReference>
<dbReference type="Pfam" id="PF05155">
    <property type="entry name" value="G2P_X_C"/>
    <property type="match status" value="1"/>
</dbReference>
<dbReference type="Pfam" id="PF05144">
    <property type="entry name" value="Phage_CRI"/>
    <property type="match status" value="1"/>
</dbReference>
<proteinExistence type="inferred from homology"/>
<sequence length="421" mass="47594">MIDMLVLRIPFKSSLVSERLDSKGNYVSHVNLAEVARLSGLTLAAHTVEYAIDGDLTVSGLKHPYESLPSHYAGIALKIFEGGKNFEPCVELKASPAKLLQGHNVFGPTSFELCGLEFFGAFAAAMPELYDLCDVTNTVVGRIDVTFSAKVANDHIANQVISFLRNVSNGQTKKTRALDYETTVMWNEGSRHRTLVAYLKHHEVQAQIKRLQKKKSSHLTIYEKNCLEVLSNPDLQLYAVGLVRFEARLHTRFFENFGLPRKFFDIVKYQDNYESGSFNLICDLWKKSFKDLFDAFKGSDMNVYDDSKVYDALINNFSSVTKSGNISNSKANRLFGFYRRLVNEGYDNVAQTMERTTFWRSLKELTSVGLSKAQLMNLSTDNNVVPLVQMINVDFSQQYPEWYVEPVSIFNRSNVVSINAA</sequence>
<reference key="1">
    <citation type="journal article" date="1985" name="J. Mol. Biol.">
        <title>Nucleotide sequence and genetic organization of the genome of the N-specific filamentous bacteriophage IKe. Comparison with the genome of the F-specific filamentous phages M13, fd and f1.</title>
        <authorList>
            <person name="Peeters B.P.H."/>
            <person name="Peters R.M."/>
            <person name="Schoenmakers J.G.G."/>
            <person name="Konings R.N.H."/>
        </authorList>
    </citation>
    <scope>NUCLEOTIDE SEQUENCE [GENOMIC DNA]</scope>
</reference>
<accession>P03660</accession>
<keyword id="KW-0024">Alternative initiation</keyword>
<keyword id="KW-0235">DNA replication</keyword>
<keyword id="KW-0238">DNA-binding</keyword>
<keyword id="KW-0255">Endonuclease</keyword>
<keyword id="KW-0378">Hydrolase</keyword>
<keyword id="KW-0436">Ligase</keyword>
<keyword id="KW-0540">Nuclease</keyword>
<keyword id="KW-1185">Reference proteome</keyword>
<feature type="chain" id="PRO_0000003311" description="Replication-associated protein G2P">
    <location>
        <begin position="1"/>
        <end position="421"/>
    </location>
</feature>
<feature type="splice variant" id="VSP_018673" description="In isoform G10P." evidence="2">
    <location>
        <begin position="1"/>
        <end position="300"/>
    </location>
</feature>
<name>REP_BPIKE</name>
<gene>
    <name type="primary">II</name>
</gene>
<organism>
    <name type="scientific">Salmonella phage IKe</name>
    <name type="common">Bacteriophage IKe</name>
    <dbReference type="NCBI Taxonomy" id="10867"/>
    <lineage>
        <taxon>Viruses</taxon>
        <taxon>Monodnaviria</taxon>
        <taxon>Loebvirae</taxon>
        <taxon>Hofneiviricota</taxon>
        <taxon>Faserviricetes</taxon>
        <taxon>Tubulavirales</taxon>
        <taxon>Inoviridae</taxon>
        <taxon>Lineavirus</taxon>
        <taxon>Lineavirus IKe</taxon>
    </lineage>
</organism>